<organism>
    <name type="scientific">Staphylococcus epidermidis (strain ATCC 12228 / FDA PCI 1200)</name>
    <dbReference type="NCBI Taxonomy" id="176280"/>
    <lineage>
        <taxon>Bacteria</taxon>
        <taxon>Bacillati</taxon>
        <taxon>Bacillota</taxon>
        <taxon>Bacilli</taxon>
        <taxon>Bacillales</taxon>
        <taxon>Staphylococcaceae</taxon>
        <taxon>Staphylococcus</taxon>
    </lineage>
</organism>
<keyword id="KW-0687">Ribonucleoprotein</keyword>
<keyword id="KW-0689">Ribosomal protein</keyword>
<comment type="similarity">
    <text evidence="2">Belongs to the bacterial ribosomal protein bL33 family.</text>
</comment>
<gene>
    <name type="primary">rpmG3</name>
    <name type="ordered locus">SE_0297</name>
</gene>
<accession>Q8CTT6</accession>
<sequence>MKKVPLNCENCGNRNYNVPKKEGSATRLTLKKYCPRCNAHTVHKESK</sequence>
<reference key="1">
    <citation type="journal article" date="2003" name="Mol. Microbiol.">
        <title>Genome-based analysis of virulence genes in a non-biofilm-forming Staphylococcus epidermidis strain (ATCC 12228).</title>
        <authorList>
            <person name="Zhang Y.-Q."/>
            <person name="Ren S.-X."/>
            <person name="Li H.-L."/>
            <person name="Wang Y.-X."/>
            <person name="Fu G."/>
            <person name="Yang J."/>
            <person name="Qin Z.-Q."/>
            <person name="Miao Y.-G."/>
            <person name="Wang W.-Y."/>
            <person name="Chen R.-S."/>
            <person name="Shen Y."/>
            <person name="Chen Z."/>
            <person name="Yuan Z.-H."/>
            <person name="Zhao G.-P."/>
            <person name="Qu D."/>
            <person name="Danchin A."/>
            <person name="Wen Y.-M."/>
        </authorList>
    </citation>
    <scope>NUCLEOTIDE SEQUENCE [LARGE SCALE GENOMIC DNA]</scope>
    <source>
        <strain>ATCC 12228 / FDA PCI 1200</strain>
    </source>
</reference>
<feature type="chain" id="PRO_0000170231" description="Large ribosomal subunit protein bL33C">
    <location>
        <begin position="1"/>
        <end position="47"/>
    </location>
</feature>
<name>RL333_STAES</name>
<evidence type="ECO:0000255" key="1">
    <source>
        <dbReference type="HAMAP-Rule" id="MF_00294"/>
    </source>
</evidence>
<evidence type="ECO:0000305" key="2"/>
<proteinExistence type="inferred from homology"/>
<dbReference type="EMBL" id="AE015929">
    <property type="protein sequence ID" value="AAO03894.1"/>
    <property type="molecule type" value="Genomic_DNA"/>
</dbReference>
<dbReference type="RefSeq" id="NP_763852.1">
    <property type="nucleotide sequence ID" value="NC_004461.1"/>
</dbReference>
<dbReference type="SMR" id="Q8CTT6"/>
<dbReference type="KEGG" id="sep:SE_0297"/>
<dbReference type="PATRIC" id="fig|176280.10.peg.273"/>
<dbReference type="eggNOG" id="COG0267">
    <property type="taxonomic scope" value="Bacteria"/>
</dbReference>
<dbReference type="HOGENOM" id="CLU_190949_0_1_9"/>
<dbReference type="OrthoDB" id="9801333at2"/>
<dbReference type="Proteomes" id="UP000001411">
    <property type="component" value="Chromosome"/>
</dbReference>
<dbReference type="GO" id="GO:0005737">
    <property type="term" value="C:cytoplasm"/>
    <property type="evidence" value="ECO:0007669"/>
    <property type="project" value="UniProtKB-ARBA"/>
</dbReference>
<dbReference type="GO" id="GO:1990904">
    <property type="term" value="C:ribonucleoprotein complex"/>
    <property type="evidence" value="ECO:0007669"/>
    <property type="project" value="UniProtKB-KW"/>
</dbReference>
<dbReference type="GO" id="GO:0005840">
    <property type="term" value="C:ribosome"/>
    <property type="evidence" value="ECO:0007669"/>
    <property type="project" value="UniProtKB-KW"/>
</dbReference>
<dbReference type="GO" id="GO:0003735">
    <property type="term" value="F:structural constituent of ribosome"/>
    <property type="evidence" value="ECO:0007669"/>
    <property type="project" value="InterPro"/>
</dbReference>
<dbReference type="GO" id="GO:0006412">
    <property type="term" value="P:translation"/>
    <property type="evidence" value="ECO:0007669"/>
    <property type="project" value="UniProtKB-UniRule"/>
</dbReference>
<dbReference type="Gene3D" id="2.20.28.120">
    <property type="entry name" value="Ribosomal protein L33"/>
    <property type="match status" value="1"/>
</dbReference>
<dbReference type="HAMAP" id="MF_00294">
    <property type="entry name" value="Ribosomal_bL33"/>
    <property type="match status" value="1"/>
</dbReference>
<dbReference type="InterPro" id="IPR001705">
    <property type="entry name" value="Ribosomal_bL33"/>
</dbReference>
<dbReference type="InterPro" id="IPR018264">
    <property type="entry name" value="Ribosomal_bL33_CS"/>
</dbReference>
<dbReference type="InterPro" id="IPR038584">
    <property type="entry name" value="Ribosomal_bL33_sf"/>
</dbReference>
<dbReference type="InterPro" id="IPR011332">
    <property type="entry name" value="Ribosomal_zn-bd"/>
</dbReference>
<dbReference type="NCBIfam" id="NF001764">
    <property type="entry name" value="PRK00504.1"/>
    <property type="match status" value="1"/>
</dbReference>
<dbReference type="NCBIfam" id="TIGR01023">
    <property type="entry name" value="rpmG_bact"/>
    <property type="match status" value="1"/>
</dbReference>
<dbReference type="Pfam" id="PF00471">
    <property type="entry name" value="Ribosomal_L33"/>
    <property type="match status" value="1"/>
</dbReference>
<dbReference type="SUPFAM" id="SSF57829">
    <property type="entry name" value="Zn-binding ribosomal proteins"/>
    <property type="match status" value="1"/>
</dbReference>
<dbReference type="PROSITE" id="PS00582">
    <property type="entry name" value="RIBOSOMAL_L33"/>
    <property type="match status" value="1"/>
</dbReference>
<protein>
    <recommendedName>
        <fullName evidence="1">Large ribosomal subunit protein bL33C</fullName>
    </recommendedName>
    <alternativeName>
        <fullName>50S ribosomal protein L33 3</fullName>
    </alternativeName>
</protein>